<sequence length="658" mass="73651">MTSLAAGKPAPLGASYDGKGVNFALFSAHAERVELCVFDEQGNEQRFDLPARSGDIWHGWLAAAGPGLRYGYRVHGPWDPAQGHRFNPAKLLIDPSAHRVEGDLPDDERLHGGMWQPDRRDSAAVAPKSQVVDLRYDWRGDKPPRTPWGETVIYEAHVKGLTLLNPQLPEAIRGTYKALGHPAMIAYFKSLGISALELLPVAQFASEPRLQRMGLSNYWGYNPLAWFALDPRYASDPDRALDEFRDAVKALHAAGIEVILDIVLNHSAEIDLEGPTVSLRGIDNRSYYWVREDSDYHNWTGCGNTLNLSHPGVVEWARQCLRFWVDECHVDGFRFDLASVMGRTPEFRQDAPLFEAIRRDSVLSQVKLIAEPWDIGPGGYQVGNFPPLFAEWNDHFRDSARRFWLQQNVSLGDFAQRFAASSDLFARDGKPPSATVNLVTAHDGFTLRDCVCFNQKHNEANGEENRDGTNNNYSNNHGIEGLEANFAVIERRRASAHALLTTLLLAQGTPMLLAGDEQGHSQHGNNNAYCQDNALTWLDWRQANPGLTAFTAALIHLRRRIPALTRNRWWQEGDGNVRWLNRNAQPLTAAEWQQGAACMQIQLSDRWLLTLNATAEVVDMVLPEGEWRAVPPFAGEDNPVIMAVWHGPAHGVCVFQRS</sequence>
<gene>
    <name evidence="1" type="primary">glgX</name>
    <name type="ordered locus">KPN78578_37600</name>
    <name type="ORF">KPN_03797</name>
</gene>
<organism>
    <name type="scientific">Klebsiella pneumoniae subsp. pneumoniae (strain ATCC 700721 / MGH 78578)</name>
    <dbReference type="NCBI Taxonomy" id="272620"/>
    <lineage>
        <taxon>Bacteria</taxon>
        <taxon>Pseudomonadati</taxon>
        <taxon>Pseudomonadota</taxon>
        <taxon>Gammaproteobacteria</taxon>
        <taxon>Enterobacterales</taxon>
        <taxon>Enterobacteriaceae</taxon>
        <taxon>Klebsiella/Raoultella group</taxon>
        <taxon>Klebsiella</taxon>
        <taxon>Klebsiella pneumoniae complex</taxon>
    </lineage>
</organism>
<keyword id="KW-0119">Carbohydrate metabolism</keyword>
<keyword id="KW-0321">Glycogen metabolism</keyword>
<keyword id="KW-0326">Glycosidase</keyword>
<keyword id="KW-0378">Hydrolase</keyword>
<dbReference type="EC" id="3.2.1.196" evidence="1"/>
<dbReference type="EMBL" id="CP000647">
    <property type="protein sequence ID" value="ABR79184.1"/>
    <property type="molecule type" value="Genomic_DNA"/>
</dbReference>
<dbReference type="RefSeq" id="WP_015959100.1">
    <property type="nucleotide sequence ID" value="NC_009648.1"/>
</dbReference>
<dbReference type="SMR" id="A6TF50"/>
<dbReference type="STRING" id="272620.KPN_03797"/>
<dbReference type="CAZy" id="CBM48">
    <property type="family name" value="Carbohydrate-Binding Module Family 48"/>
</dbReference>
<dbReference type="CAZy" id="GH13">
    <property type="family name" value="Glycoside Hydrolase Family 13"/>
</dbReference>
<dbReference type="PaxDb" id="272620-KPN_03797"/>
<dbReference type="EnsemblBacteria" id="ABR79184">
    <property type="protein sequence ID" value="ABR79184"/>
    <property type="gene ID" value="KPN_03797"/>
</dbReference>
<dbReference type="KEGG" id="kpn:KPN_03797"/>
<dbReference type="HOGENOM" id="CLU_011725_1_1_6"/>
<dbReference type="UniPathway" id="UPA00165"/>
<dbReference type="Proteomes" id="UP000000265">
    <property type="component" value="Chromosome"/>
</dbReference>
<dbReference type="GO" id="GO:0004133">
    <property type="term" value="F:glycogen debranching enzyme activity"/>
    <property type="evidence" value="ECO:0007669"/>
    <property type="project" value="UniProtKB-UniRule"/>
</dbReference>
<dbReference type="GO" id="GO:0004553">
    <property type="term" value="F:hydrolase activity, hydrolyzing O-glycosyl compounds"/>
    <property type="evidence" value="ECO:0007669"/>
    <property type="project" value="InterPro"/>
</dbReference>
<dbReference type="GO" id="GO:0005980">
    <property type="term" value="P:glycogen catabolic process"/>
    <property type="evidence" value="ECO:0007669"/>
    <property type="project" value="UniProtKB-UniRule"/>
</dbReference>
<dbReference type="CDD" id="cd11326">
    <property type="entry name" value="AmyAc_Glg_debranch"/>
    <property type="match status" value="1"/>
</dbReference>
<dbReference type="CDD" id="cd02856">
    <property type="entry name" value="E_set_GDE_Isoamylase_N"/>
    <property type="match status" value="1"/>
</dbReference>
<dbReference type="Gene3D" id="3.20.20.80">
    <property type="entry name" value="Glycosidases"/>
    <property type="match status" value="1"/>
</dbReference>
<dbReference type="Gene3D" id="2.60.40.1180">
    <property type="entry name" value="Golgi alpha-mannosidase II"/>
    <property type="match status" value="1"/>
</dbReference>
<dbReference type="Gene3D" id="2.60.40.10">
    <property type="entry name" value="Immunoglobulins"/>
    <property type="match status" value="1"/>
</dbReference>
<dbReference type="HAMAP" id="MF_01248">
    <property type="entry name" value="GlgX"/>
    <property type="match status" value="1"/>
</dbReference>
<dbReference type="InterPro" id="IPR040784">
    <property type="entry name" value="GlgX_C"/>
</dbReference>
<dbReference type="InterPro" id="IPR044505">
    <property type="entry name" value="GlgX_Isoamylase_N_E_set"/>
</dbReference>
<dbReference type="InterPro" id="IPR006047">
    <property type="entry name" value="Glyco_hydro_13_cat_dom"/>
</dbReference>
<dbReference type="InterPro" id="IPR004193">
    <property type="entry name" value="Glyco_hydro_13_N"/>
</dbReference>
<dbReference type="InterPro" id="IPR013780">
    <property type="entry name" value="Glyco_hydro_b"/>
</dbReference>
<dbReference type="InterPro" id="IPR022844">
    <property type="entry name" value="Glycogen_debranch_bac"/>
</dbReference>
<dbReference type="InterPro" id="IPR011837">
    <property type="entry name" value="Glycogen_debranch_GlgX"/>
</dbReference>
<dbReference type="InterPro" id="IPR017853">
    <property type="entry name" value="Glycoside_hydrolase_SF"/>
</dbReference>
<dbReference type="InterPro" id="IPR013783">
    <property type="entry name" value="Ig-like_fold"/>
</dbReference>
<dbReference type="InterPro" id="IPR014756">
    <property type="entry name" value="Ig_E-set"/>
</dbReference>
<dbReference type="NCBIfam" id="TIGR02100">
    <property type="entry name" value="glgX_debranch"/>
    <property type="match status" value="1"/>
</dbReference>
<dbReference type="NCBIfam" id="NF002983">
    <property type="entry name" value="PRK03705.1"/>
    <property type="match status" value="1"/>
</dbReference>
<dbReference type="PANTHER" id="PTHR43002">
    <property type="entry name" value="GLYCOGEN DEBRANCHING ENZYME"/>
    <property type="match status" value="1"/>
</dbReference>
<dbReference type="Pfam" id="PF00128">
    <property type="entry name" value="Alpha-amylase"/>
    <property type="match status" value="1"/>
</dbReference>
<dbReference type="Pfam" id="PF02922">
    <property type="entry name" value="CBM_48"/>
    <property type="match status" value="1"/>
</dbReference>
<dbReference type="Pfam" id="PF18390">
    <property type="entry name" value="GlgX_C"/>
    <property type="match status" value="1"/>
</dbReference>
<dbReference type="SMART" id="SM00642">
    <property type="entry name" value="Aamy"/>
    <property type="match status" value="1"/>
</dbReference>
<dbReference type="SUPFAM" id="SSF51445">
    <property type="entry name" value="(Trans)glycosidases"/>
    <property type="match status" value="1"/>
</dbReference>
<dbReference type="SUPFAM" id="SSF81296">
    <property type="entry name" value="E set domains"/>
    <property type="match status" value="1"/>
</dbReference>
<reference key="1">
    <citation type="submission" date="2006-09" db="EMBL/GenBank/DDBJ databases">
        <authorList>
            <consortium name="The Klebsiella pneumonia Genome Sequencing Project"/>
            <person name="McClelland M."/>
            <person name="Sanderson E.K."/>
            <person name="Spieth J."/>
            <person name="Clifton W.S."/>
            <person name="Latreille P."/>
            <person name="Sabo A."/>
            <person name="Pepin K."/>
            <person name="Bhonagiri V."/>
            <person name="Porwollik S."/>
            <person name="Ali J."/>
            <person name="Wilson R.K."/>
        </authorList>
    </citation>
    <scope>NUCLEOTIDE SEQUENCE [LARGE SCALE GENOMIC DNA]</scope>
    <source>
        <strain>ATCC 700721 / MGH 78578</strain>
    </source>
</reference>
<comment type="function">
    <text evidence="1">Removes maltotriose and maltotetraose chains that are attached by 1,6-alpha-linkage to the limit dextrin main chain, generating a debranched limit dextrin.</text>
</comment>
<comment type="catalytic activity">
    <reaction evidence="1">
        <text>Hydrolysis of (1-&gt;6)-alpha-D-glucosidic linkages to branches with degrees of polymerization of three or four glucose residues in limit dextrin.</text>
        <dbReference type="EC" id="3.2.1.196"/>
    </reaction>
</comment>
<comment type="pathway">
    <text evidence="1">Glycan degradation; glycogen degradation.</text>
</comment>
<comment type="similarity">
    <text evidence="1">Belongs to the glycosyl hydrolase 13 family.</text>
</comment>
<protein>
    <recommendedName>
        <fullName evidence="1">Glycogen debranching enzyme</fullName>
        <ecNumber evidence="1">3.2.1.196</ecNumber>
    </recommendedName>
    <alternativeName>
        <fullName evidence="1">Limit dextrin alpha-1,6-maltotetraose-hydrolase</fullName>
    </alternativeName>
</protein>
<evidence type="ECO:0000255" key="1">
    <source>
        <dbReference type="HAMAP-Rule" id="MF_01248"/>
    </source>
</evidence>
<name>GLGX_KLEP7</name>
<proteinExistence type="inferred from homology"/>
<feature type="chain" id="PRO_1000165062" description="Glycogen debranching enzyme">
    <location>
        <begin position="1"/>
        <end position="658"/>
    </location>
</feature>
<feature type="active site" description="Nucleophile" evidence="1">
    <location>
        <position position="336"/>
    </location>
</feature>
<feature type="active site" description="Proton donor" evidence="1">
    <location>
        <position position="371"/>
    </location>
</feature>
<feature type="site" description="Transition state stabilizer" evidence="1">
    <location>
        <position position="443"/>
    </location>
</feature>
<accession>A6TF50</accession>